<name>Y4433_NOSP7</name>
<sequence>MDWSHLWLYVSPPVLGGIIGYFTNDIAIKMLFRPYQAIYIAGRRVPFTPGLIPRNQERLALNISKTIMGSLLTPQELQNLARRLLQTERVQAAILWLLRLAIEQINTEKNEKSAKIVAGILRDLLGESLPRLLKVLARREDFLEAQINQIFDQILLEFQLSEEQATRLADWLLEVVLPPDMLRQAIVDFLTDRTIQIIDEGFREKTSGTYWVVANLFGLRNTLTRLRTFCLDEKEATNNRLQELTQDLQIRERIRKFLQNLSLQNLPMGTVRQLRKTTRESVRHYLQNSGSDFLQGLTDSVDWENIAVVLLNRLSTSSVVSTSLEVMSQELALILDKYLEKDLEIIVAQAIPILSIDQVIVDRVKSTSPADLEAAIEGIVKNELQAIVTLGGVLGFVIGLLQTVFLVLSQY</sequence>
<comment type="subcellular location">
    <subcellularLocation>
        <location evidence="1">Cell inner membrane</location>
        <topology evidence="1">Multi-pass membrane protein</topology>
    </subcellularLocation>
</comment>
<comment type="similarity">
    <text evidence="3">Belongs to the UPF0754 family.</text>
</comment>
<evidence type="ECO:0000250" key="1"/>
<evidence type="ECO:0000255" key="2"/>
<evidence type="ECO:0000305" key="3"/>
<reference key="1">
    <citation type="journal article" date="2013" name="Plant Physiol.">
        <title>A Nostoc punctiforme Sugar Transporter Necessary to Establish a Cyanobacterium-Plant Symbiosis.</title>
        <authorList>
            <person name="Ekman M."/>
            <person name="Picossi S."/>
            <person name="Campbell E.L."/>
            <person name="Meeks J.C."/>
            <person name="Flores E."/>
        </authorList>
    </citation>
    <scope>NUCLEOTIDE SEQUENCE [LARGE SCALE GENOMIC DNA]</scope>
    <source>
        <strain>ATCC 29133 / PCC 73102</strain>
    </source>
</reference>
<keyword id="KW-0997">Cell inner membrane</keyword>
<keyword id="KW-1003">Cell membrane</keyword>
<keyword id="KW-0472">Membrane</keyword>
<keyword id="KW-1185">Reference proteome</keyword>
<keyword id="KW-0812">Transmembrane</keyword>
<keyword id="KW-1133">Transmembrane helix</keyword>
<gene>
    <name type="ordered locus">Npun_R4433</name>
</gene>
<accession>B2IUM6</accession>
<feature type="chain" id="PRO_0000388303" description="UPF0754 membrane protein Npun_R4433">
    <location>
        <begin position="1"/>
        <end position="411"/>
    </location>
</feature>
<feature type="transmembrane region" description="Helical" evidence="2">
    <location>
        <begin position="3"/>
        <end position="23"/>
    </location>
</feature>
<feature type="transmembrane region" description="Helical" evidence="2">
    <location>
        <begin position="387"/>
        <end position="407"/>
    </location>
</feature>
<organism>
    <name type="scientific">Nostoc punctiforme (strain ATCC 29133 / PCC 73102)</name>
    <dbReference type="NCBI Taxonomy" id="63737"/>
    <lineage>
        <taxon>Bacteria</taxon>
        <taxon>Bacillati</taxon>
        <taxon>Cyanobacteriota</taxon>
        <taxon>Cyanophyceae</taxon>
        <taxon>Nostocales</taxon>
        <taxon>Nostocaceae</taxon>
        <taxon>Nostoc</taxon>
    </lineage>
</organism>
<protein>
    <recommendedName>
        <fullName>UPF0754 membrane protein Npun_R4433</fullName>
    </recommendedName>
</protein>
<dbReference type="EMBL" id="CP001037">
    <property type="protein sequence ID" value="ACC82801.1"/>
    <property type="molecule type" value="Genomic_DNA"/>
</dbReference>
<dbReference type="RefSeq" id="WP_012410762.1">
    <property type="nucleotide sequence ID" value="NC_010628.1"/>
</dbReference>
<dbReference type="STRING" id="63737.Npun_R4433"/>
<dbReference type="EnsemblBacteria" id="ACC82801">
    <property type="protein sequence ID" value="ACC82801"/>
    <property type="gene ID" value="Npun_R4433"/>
</dbReference>
<dbReference type="KEGG" id="npu:Npun_R4433"/>
<dbReference type="eggNOG" id="COG4399">
    <property type="taxonomic scope" value="Bacteria"/>
</dbReference>
<dbReference type="HOGENOM" id="CLU_042384_0_1_3"/>
<dbReference type="OrthoDB" id="9787430at2"/>
<dbReference type="PhylomeDB" id="B2IUM6"/>
<dbReference type="Proteomes" id="UP000001191">
    <property type="component" value="Chromosome"/>
</dbReference>
<dbReference type="GO" id="GO:0005886">
    <property type="term" value="C:plasma membrane"/>
    <property type="evidence" value="ECO:0007669"/>
    <property type="project" value="UniProtKB-SubCell"/>
</dbReference>
<dbReference type="InterPro" id="IPR007383">
    <property type="entry name" value="DUF445"/>
</dbReference>
<dbReference type="InterPro" id="IPR016991">
    <property type="entry name" value="UCP032178"/>
</dbReference>
<dbReference type="PANTHER" id="PTHR35791">
    <property type="entry name" value="UPF0754 MEMBRANE PROTEIN YHEB"/>
    <property type="match status" value="1"/>
</dbReference>
<dbReference type="PANTHER" id="PTHR35791:SF1">
    <property type="entry name" value="UPF0754 MEMBRANE PROTEIN YHEB"/>
    <property type="match status" value="1"/>
</dbReference>
<dbReference type="Pfam" id="PF04286">
    <property type="entry name" value="DUF445"/>
    <property type="match status" value="1"/>
</dbReference>
<dbReference type="PIRSF" id="PIRSF032178">
    <property type="entry name" value="UCP032178"/>
    <property type="match status" value="1"/>
</dbReference>
<proteinExistence type="inferred from homology"/>